<organism>
    <name type="scientific">Methylocella silvestris (strain DSM 15510 / CIP 108128 / LMG 27833 / NCIMB 13906 / BL2)</name>
    <dbReference type="NCBI Taxonomy" id="395965"/>
    <lineage>
        <taxon>Bacteria</taxon>
        <taxon>Pseudomonadati</taxon>
        <taxon>Pseudomonadota</taxon>
        <taxon>Alphaproteobacteria</taxon>
        <taxon>Hyphomicrobiales</taxon>
        <taxon>Beijerinckiaceae</taxon>
        <taxon>Methylocella</taxon>
    </lineage>
</organism>
<reference key="1">
    <citation type="journal article" date="2010" name="J. Bacteriol.">
        <title>Complete genome sequence of the aerobic facultative methanotroph Methylocella silvestris BL2.</title>
        <authorList>
            <person name="Chen Y."/>
            <person name="Crombie A."/>
            <person name="Rahman M.T."/>
            <person name="Dedysh S.N."/>
            <person name="Liesack W."/>
            <person name="Stott M.B."/>
            <person name="Alam M."/>
            <person name="Theisen A.R."/>
            <person name="Murrell J.C."/>
            <person name="Dunfield P.F."/>
        </authorList>
    </citation>
    <scope>NUCLEOTIDE SEQUENCE [LARGE SCALE GENOMIC DNA]</scope>
    <source>
        <strain>DSM 15510 / CIP 108128 / LMG 27833 / NCIMB 13906 / BL2</strain>
    </source>
</reference>
<name>OBG_METSB</name>
<comment type="function">
    <text evidence="1">An essential GTPase which binds GTP, GDP and possibly (p)ppGpp with moderate affinity, with high nucleotide exchange rates and a fairly low GTP hydrolysis rate. Plays a role in control of the cell cycle, stress response, ribosome biogenesis and in those bacteria that undergo differentiation, in morphogenesis control.</text>
</comment>
<comment type="cofactor">
    <cofactor evidence="1">
        <name>Mg(2+)</name>
        <dbReference type="ChEBI" id="CHEBI:18420"/>
    </cofactor>
</comment>
<comment type="subunit">
    <text evidence="1">Monomer.</text>
</comment>
<comment type="subcellular location">
    <subcellularLocation>
        <location evidence="1">Cytoplasm</location>
    </subcellularLocation>
</comment>
<comment type="similarity">
    <text evidence="1">Belongs to the TRAFAC class OBG-HflX-like GTPase superfamily. OBG GTPase family.</text>
</comment>
<gene>
    <name evidence="1" type="primary">obg</name>
    <name type="ordered locus">Msil_3280</name>
</gene>
<keyword id="KW-0963">Cytoplasm</keyword>
<keyword id="KW-0342">GTP-binding</keyword>
<keyword id="KW-0378">Hydrolase</keyword>
<keyword id="KW-0460">Magnesium</keyword>
<keyword id="KW-0479">Metal-binding</keyword>
<keyword id="KW-0547">Nucleotide-binding</keyword>
<keyword id="KW-1185">Reference proteome</keyword>
<feature type="chain" id="PRO_0000386045" description="GTPase Obg">
    <location>
        <begin position="1"/>
        <end position="346"/>
    </location>
</feature>
<feature type="domain" description="Obg" evidence="2">
    <location>
        <begin position="1"/>
        <end position="159"/>
    </location>
</feature>
<feature type="domain" description="OBG-type G" evidence="1">
    <location>
        <begin position="160"/>
        <end position="327"/>
    </location>
</feature>
<feature type="binding site" evidence="1">
    <location>
        <begin position="166"/>
        <end position="173"/>
    </location>
    <ligand>
        <name>GTP</name>
        <dbReference type="ChEBI" id="CHEBI:37565"/>
    </ligand>
</feature>
<feature type="binding site" evidence="1">
    <location>
        <position position="173"/>
    </location>
    <ligand>
        <name>Mg(2+)</name>
        <dbReference type="ChEBI" id="CHEBI:18420"/>
    </ligand>
</feature>
<feature type="binding site" evidence="1">
    <location>
        <begin position="191"/>
        <end position="195"/>
    </location>
    <ligand>
        <name>GTP</name>
        <dbReference type="ChEBI" id="CHEBI:37565"/>
    </ligand>
</feature>
<feature type="binding site" evidence="1">
    <location>
        <position position="193"/>
    </location>
    <ligand>
        <name>Mg(2+)</name>
        <dbReference type="ChEBI" id="CHEBI:18420"/>
    </ligand>
</feature>
<feature type="binding site" evidence="1">
    <location>
        <begin position="212"/>
        <end position="215"/>
    </location>
    <ligand>
        <name>GTP</name>
        <dbReference type="ChEBI" id="CHEBI:37565"/>
    </ligand>
</feature>
<feature type="binding site" evidence="1">
    <location>
        <begin position="279"/>
        <end position="282"/>
    </location>
    <ligand>
        <name>GTP</name>
        <dbReference type="ChEBI" id="CHEBI:37565"/>
    </ligand>
</feature>
<feature type="binding site" evidence="1">
    <location>
        <begin position="308"/>
        <end position="310"/>
    </location>
    <ligand>
        <name>GTP</name>
        <dbReference type="ChEBI" id="CHEBI:37565"/>
    </ligand>
</feature>
<sequence>MKFLDSAKIYIRSGDGGAGCLSFRREKFIEFGGPDGGDGGRGGDVVVECVGGLNTLIDYRYQQHFKAKTGVHGMGKNRAGGRGADAVLKVPVGTQILDEDGETMIADMTEAGQRLVLARGGNGGFGNAHFKSATNQAPRRVNPGQEGVERTVLLRLKLIADAGLVGLPNAGKSTFLATVSAARPKIADYPFTTLNPQLGVVGCDGREFVLADIPGLIEGAHEGIGLGDRFLGHVERCRVLLHLVGADTEHAGKAYKTVRRELEAYGGGLADKPEIVALSKVDSVDPDTLKQQAMRLKRAAKRAPLQLSAATNLNVQKALRAVLAEIDAAAVADAAGTAADAVVWAP</sequence>
<proteinExistence type="inferred from homology"/>
<evidence type="ECO:0000255" key="1">
    <source>
        <dbReference type="HAMAP-Rule" id="MF_01454"/>
    </source>
</evidence>
<evidence type="ECO:0000255" key="2">
    <source>
        <dbReference type="PROSITE-ProRule" id="PRU01231"/>
    </source>
</evidence>
<protein>
    <recommendedName>
        <fullName evidence="1">GTPase Obg</fullName>
        <ecNumber evidence="1">3.6.5.-</ecNumber>
    </recommendedName>
    <alternativeName>
        <fullName evidence="1">GTP-binding protein Obg</fullName>
    </alternativeName>
</protein>
<accession>B8EQH4</accession>
<dbReference type="EC" id="3.6.5.-" evidence="1"/>
<dbReference type="EMBL" id="CP001280">
    <property type="protein sequence ID" value="ACK52187.1"/>
    <property type="molecule type" value="Genomic_DNA"/>
</dbReference>
<dbReference type="RefSeq" id="WP_012592256.1">
    <property type="nucleotide sequence ID" value="NC_011666.1"/>
</dbReference>
<dbReference type="SMR" id="B8EQH4"/>
<dbReference type="STRING" id="395965.Msil_3280"/>
<dbReference type="KEGG" id="msl:Msil_3280"/>
<dbReference type="eggNOG" id="COG0536">
    <property type="taxonomic scope" value="Bacteria"/>
</dbReference>
<dbReference type="HOGENOM" id="CLU_011747_2_0_5"/>
<dbReference type="OrthoDB" id="9807318at2"/>
<dbReference type="Proteomes" id="UP000002257">
    <property type="component" value="Chromosome"/>
</dbReference>
<dbReference type="GO" id="GO:0005737">
    <property type="term" value="C:cytoplasm"/>
    <property type="evidence" value="ECO:0007669"/>
    <property type="project" value="UniProtKB-SubCell"/>
</dbReference>
<dbReference type="GO" id="GO:0005525">
    <property type="term" value="F:GTP binding"/>
    <property type="evidence" value="ECO:0007669"/>
    <property type="project" value="UniProtKB-UniRule"/>
</dbReference>
<dbReference type="GO" id="GO:0003924">
    <property type="term" value="F:GTPase activity"/>
    <property type="evidence" value="ECO:0007669"/>
    <property type="project" value="UniProtKB-UniRule"/>
</dbReference>
<dbReference type="GO" id="GO:0000287">
    <property type="term" value="F:magnesium ion binding"/>
    <property type="evidence" value="ECO:0007669"/>
    <property type="project" value="InterPro"/>
</dbReference>
<dbReference type="GO" id="GO:0042254">
    <property type="term" value="P:ribosome biogenesis"/>
    <property type="evidence" value="ECO:0007669"/>
    <property type="project" value="UniProtKB-UniRule"/>
</dbReference>
<dbReference type="CDD" id="cd01898">
    <property type="entry name" value="Obg"/>
    <property type="match status" value="1"/>
</dbReference>
<dbReference type="FunFam" id="2.70.210.12:FF:000001">
    <property type="entry name" value="GTPase Obg"/>
    <property type="match status" value="1"/>
</dbReference>
<dbReference type="Gene3D" id="2.70.210.12">
    <property type="entry name" value="GTP1/OBG domain"/>
    <property type="match status" value="1"/>
</dbReference>
<dbReference type="Gene3D" id="3.40.50.300">
    <property type="entry name" value="P-loop containing nucleotide triphosphate hydrolases"/>
    <property type="match status" value="1"/>
</dbReference>
<dbReference type="HAMAP" id="MF_01454">
    <property type="entry name" value="GTPase_Obg"/>
    <property type="match status" value="1"/>
</dbReference>
<dbReference type="InterPro" id="IPR031167">
    <property type="entry name" value="G_OBG"/>
</dbReference>
<dbReference type="InterPro" id="IPR006073">
    <property type="entry name" value="GTP-bd"/>
</dbReference>
<dbReference type="InterPro" id="IPR014100">
    <property type="entry name" value="GTP-bd_Obg/CgtA"/>
</dbReference>
<dbReference type="InterPro" id="IPR006074">
    <property type="entry name" value="GTP1-OBG_CS"/>
</dbReference>
<dbReference type="InterPro" id="IPR006169">
    <property type="entry name" value="GTP1_OBG_dom"/>
</dbReference>
<dbReference type="InterPro" id="IPR036726">
    <property type="entry name" value="GTP1_OBG_dom_sf"/>
</dbReference>
<dbReference type="InterPro" id="IPR045086">
    <property type="entry name" value="OBG_GTPase"/>
</dbReference>
<dbReference type="InterPro" id="IPR027417">
    <property type="entry name" value="P-loop_NTPase"/>
</dbReference>
<dbReference type="NCBIfam" id="TIGR02729">
    <property type="entry name" value="Obg_CgtA"/>
    <property type="match status" value="1"/>
</dbReference>
<dbReference type="NCBIfam" id="NF008955">
    <property type="entry name" value="PRK12297.1"/>
    <property type="match status" value="1"/>
</dbReference>
<dbReference type="NCBIfam" id="NF008956">
    <property type="entry name" value="PRK12299.1"/>
    <property type="match status" value="1"/>
</dbReference>
<dbReference type="PANTHER" id="PTHR11702">
    <property type="entry name" value="DEVELOPMENTALLY REGULATED GTP-BINDING PROTEIN-RELATED"/>
    <property type="match status" value="1"/>
</dbReference>
<dbReference type="PANTHER" id="PTHR11702:SF31">
    <property type="entry name" value="MITOCHONDRIAL RIBOSOME-ASSOCIATED GTPASE 2"/>
    <property type="match status" value="1"/>
</dbReference>
<dbReference type="Pfam" id="PF01018">
    <property type="entry name" value="GTP1_OBG"/>
    <property type="match status" value="1"/>
</dbReference>
<dbReference type="Pfam" id="PF01926">
    <property type="entry name" value="MMR_HSR1"/>
    <property type="match status" value="1"/>
</dbReference>
<dbReference type="PIRSF" id="PIRSF002401">
    <property type="entry name" value="GTP_bd_Obg/CgtA"/>
    <property type="match status" value="1"/>
</dbReference>
<dbReference type="PRINTS" id="PR00326">
    <property type="entry name" value="GTP1OBG"/>
</dbReference>
<dbReference type="SUPFAM" id="SSF82051">
    <property type="entry name" value="Obg GTP-binding protein N-terminal domain"/>
    <property type="match status" value="1"/>
</dbReference>
<dbReference type="SUPFAM" id="SSF52540">
    <property type="entry name" value="P-loop containing nucleoside triphosphate hydrolases"/>
    <property type="match status" value="1"/>
</dbReference>
<dbReference type="PROSITE" id="PS51710">
    <property type="entry name" value="G_OBG"/>
    <property type="match status" value="1"/>
</dbReference>
<dbReference type="PROSITE" id="PS00905">
    <property type="entry name" value="GTP1_OBG"/>
    <property type="match status" value="1"/>
</dbReference>
<dbReference type="PROSITE" id="PS51883">
    <property type="entry name" value="OBG"/>
    <property type="match status" value="1"/>
</dbReference>